<gene>
    <name type="primary">SAR1</name>
    <name type="ORF">MGG_06362</name>
</gene>
<protein>
    <recommendedName>
        <fullName>Small COPII coat GTPase SAR1</fullName>
        <ecNumber>3.6.5.-</ecNumber>
    </recommendedName>
</protein>
<keyword id="KW-0968">Cytoplasmic vesicle</keyword>
<keyword id="KW-0256">Endoplasmic reticulum</keyword>
<keyword id="KW-0931">ER-Golgi transport</keyword>
<keyword id="KW-0333">Golgi apparatus</keyword>
<keyword id="KW-0342">GTP-binding</keyword>
<keyword id="KW-0378">Hydrolase</keyword>
<keyword id="KW-0472">Membrane</keyword>
<keyword id="KW-0547">Nucleotide-binding</keyword>
<keyword id="KW-0653">Protein transport</keyword>
<keyword id="KW-1185">Reference proteome</keyword>
<keyword id="KW-0813">Transport</keyword>
<organism>
    <name type="scientific">Pyricularia oryzae (strain 70-15 / ATCC MYA-4617 / FGSC 8958)</name>
    <name type="common">Rice blast fungus</name>
    <name type="synonym">Magnaporthe oryzae</name>
    <dbReference type="NCBI Taxonomy" id="242507"/>
    <lineage>
        <taxon>Eukaryota</taxon>
        <taxon>Fungi</taxon>
        <taxon>Dikarya</taxon>
        <taxon>Ascomycota</taxon>
        <taxon>Pezizomycotina</taxon>
        <taxon>Sordariomycetes</taxon>
        <taxon>Sordariomycetidae</taxon>
        <taxon>Magnaporthales</taxon>
        <taxon>Pyriculariaceae</taxon>
        <taxon>Pyricularia</taxon>
    </lineage>
</organism>
<feature type="chain" id="PRO_0000295518" description="Small COPII coat GTPase SAR1">
    <location>
        <begin position="1"/>
        <end position="189"/>
    </location>
</feature>
<feature type="binding site" evidence="1">
    <location>
        <begin position="27"/>
        <end position="34"/>
    </location>
    <ligand>
        <name>GTP</name>
        <dbReference type="ChEBI" id="CHEBI:37565"/>
    </ligand>
</feature>
<feature type="binding site" evidence="1">
    <location>
        <begin position="70"/>
        <end position="73"/>
    </location>
    <ligand>
        <name>GTP</name>
        <dbReference type="ChEBI" id="CHEBI:37565"/>
    </ligand>
</feature>
<feature type="binding site" evidence="1">
    <location>
        <begin position="129"/>
        <end position="132"/>
    </location>
    <ligand>
        <name>GTP</name>
        <dbReference type="ChEBI" id="CHEBI:37565"/>
    </ligand>
</feature>
<comment type="function">
    <text evidence="1">Small GTPase component of the coat protein complex II (COPII) which promotes the formation of transport vesicles from the endoplasmic reticulum (ER). The coat has two main functions, the physical deformation of the endoplasmic reticulum membrane into vesicles and the selection of cargo molecules. SAR1 controls the coat assembly in a stepwise manner. Activated SAR1-GTP binds to membranes first and recruits the SEC23/24 complex. These SEC23/24-SAR1 prebudding intermediates are then collected by the SEC13/31 complex as subunits polymerize to form coated transport vesicles. Conversion to SAR1-GDP triggers coat release and recycles COPII subunits (By similarity).</text>
</comment>
<comment type="catalytic activity">
    <reaction>
        <text>GTP + H2O = GDP + phosphate + H(+)</text>
        <dbReference type="Rhea" id="RHEA:19669"/>
        <dbReference type="ChEBI" id="CHEBI:15377"/>
        <dbReference type="ChEBI" id="CHEBI:15378"/>
        <dbReference type="ChEBI" id="CHEBI:37565"/>
        <dbReference type="ChEBI" id="CHEBI:43474"/>
        <dbReference type="ChEBI" id="CHEBI:58189"/>
    </reaction>
</comment>
<comment type="subunit">
    <text evidence="1">COPII is composed of at least 5 proteins: the SEC23/24 complex, the SEC13/31 complex and SAR1.</text>
</comment>
<comment type="subcellular location">
    <subcellularLocation>
        <location evidence="1">Cytoplasmic vesicle</location>
        <location evidence="1">COPII-coated vesicle membrane</location>
        <topology evidence="1">Peripheral membrane protein</topology>
        <orientation evidence="1">Cytoplasmic side</orientation>
    </subcellularLocation>
    <subcellularLocation>
        <location evidence="1">Endoplasmic reticulum membrane</location>
        <topology evidence="1">Peripheral membrane protein</topology>
        <orientation evidence="1">Cytoplasmic side</orientation>
    </subcellularLocation>
    <subcellularLocation>
        <location evidence="1">Golgi apparatus membrane</location>
        <topology evidence="1">Peripheral membrane protein</topology>
        <orientation evidence="1">Cytoplasmic side</orientation>
    </subcellularLocation>
</comment>
<comment type="similarity">
    <text evidence="2">Belongs to the small GTPase superfamily. SAR1 family.</text>
</comment>
<sequence>MWIINWFYDVLSSLGLLNKHAKLLFLGLDNAGKTTLLHMLKNDRVAILQPTLHPTSEELAIGNVRFTTFDLGGHQQARRLWKDYFPEVNGIVFLVDAKDHDRFPEAKAELDALLSMEELAKVPFVILGNKIDHPEAISEEELRHQLGLYQTTGKGKVPLEGIRPIEVFMCSVVMRQGYGEGIRWLSQYV</sequence>
<evidence type="ECO:0000250" key="1"/>
<evidence type="ECO:0000305" key="2"/>
<reference key="1">
    <citation type="journal article" date="2005" name="Nature">
        <title>The genome sequence of the rice blast fungus Magnaporthe grisea.</title>
        <authorList>
            <person name="Dean R.A."/>
            <person name="Talbot N.J."/>
            <person name="Ebbole D.J."/>
            <person name="Farman M.L."/>
            <person name="Mitchell T.K."/>
            <person name="Orbach M.J."/>
            <person name="Thon M.R."/>
            <person name="Kulkarni R."/>
            <person name="Xu J.-R."/>
            <person name="Pan H."/>
            <person name="Read N.D."/>
            <person name="Lee Y.-H."/>
            <person name="Carbone I."/>
            <person name="Brown D."/>
            <person name="Oh Y.Y."/>
            <person name="Donofrio N."/>
            <person name="Jeong J.S."/>
            <person name="Soanes D.M."/>
            <person name="Djonovic S."/>
            <person name="Kolomiets E."/>
            <person name="Rehmeyer C."/>
            <person name="Li W."/>
            <person name="Harding M."/>
            <person name="Kim S."/>
            <person name="Lebrun M.-H."/>
            <person name="Bohnert H."/>
            <person name="Coughlan S."/>
            <person name="Butler J."/>
            <person name="Calvo S.E."/>
            <person name="Ma L.-J."/>
            <person name="Nicol R."/>
            <person name="Purcell S."/>
            <person name="Nusbaum C."/>
            <person name="Galagan J.E."/>
            <person name="Birren B.W."/>
        </authorList>
    </citation>
    <scope>NUCLEOTIDE SEQUENCE [LARGE SCALE GENOMIC DNA]</scope>
    <source>
        <strain>70-15 / ATCC MYA-4617 / FGSC 8958</strain>
    </source>
</reference>
<accession>P0CT16</accession>
<accession>G4N7U2</accession>
<accession>Q5EMZ6</accession>
<dbReference type="EC" id="3.6.5.-"/>
<dbReference type="EMBL" id="CM001234">
    <property type="protein sequence ID" value="EHA50896.1"/>
    <property type="molecule type" value="Genomic_DNA"/>
</dbReference>
<dbReference type="RefSeq" id="XP_003717215.1">
    <property type="nucleotide sequence ID" value="XM_003717167.1"/>
</dbReference>
<dbReference type="SMR" id="P0CT16"/>
<dbReference type="FunCoup" id="P0CT16">
    <property type="interactions" value="922"/>
</dbReference>
<dbReference type="STRING" id="242507.P0CT16"/>
<dbReference type="EnsemblFungi" id="MGG_06362T0">
    <property type="protein sequence ID" value="MGG_06362T0"/>
    <property type="gene ID" value="MGG_06362"/>
</dbReference>
<dbReference type="GeneID" id="2684517"/>
<dbReference type="KEGG" id="mgr:MGG_06362"/>
<dbReference type="VEuPathDB" id="FungiDB:MGG_06362"/>
<dbReference type="eggNOG" id="KOG0077">
    <property type="taxonomic scope" value="Eukaryota"/>
</dbReference>
<dbReference type="HOGENOM" id="CLU_040729_6_0_1"/>
<dbReference type="InParanoid" id="P0CT16"/>
<dbReference type="OMA" id="GLWNKHG"/>
<dbReference type="OrthoDB" id="2011769at2759"/>
<dbReference type="PHI-base" id="PHI:9554"/>
<dbReference type="Proteomes" id="UP000009058">
    <property type="component" value="Chromosome 4"/>
</dbReference>
<dbReference type="GO" id="GO:0030127">
    <property type="term" value="C:COPII vesicle coat"/>
    <property type="evidence" value="ECO:0007669"/>
    <property type="project" value="EnsemblFungi"/>
</dbReference>
<dbReference type="GO" id="GO:0070971">
    <property type="term" value="C:endoplasmic reticulum exit site"/>
    <property type="evidence" value="ECO:0007669"/>
    <property type="project" value="EnsemblFungi"/>
</dbReference>
<dbReference type="GO" id="GO:0005789">
    <property type="term" value="C:endoplasmic reticulum membrane"/>
    <property type="evidence" value="ECO:0007669"/>
    <property type="project" value="UniProtKB-SubCell"/>
</dbReference>
<dbReference type="GO" id="GO:0000139">
    <property type="term" value="C:Golgi membrane"/>
    <property type="evidence" value="ECO:0007669"/>
    <property type="project" value="UniProtKB-SubCell"/>
</dbReference>
<dbReference type="GO" id="GO:0044233">
    <property type="term" value="C:mitochondria-associated endoplasmic reticulum membrane contact site"/>
    <property type="evidence" value="ECO:0007669"/>
    <property type="project" value="EnsemblFungi"/>
</dbReference>
<dbReference type="GO" id="GO:0005739">
    <property type="term" value="C:mitochondrion"/>
    <property type="evidence" value="ECO:0007669"/>
    <property type="project" value="GOC"/>
</dbReference>
<dbReference type="GO" id="GO:0005525">
    <property type="term" value="F:GTP binding"/>
    <property type="evidence" value="ECO:0007669"/>
    <property type="project" value="UniProtKB-KW"/>
</dbReference>
<dbReference type="GO" id="GO:0003924">
    <property type="term" value="F:GTPase activity"/>
    <property type="evidence" value="ECO:0007669"/>
    <property type="project" value="EnsemblFungi"/>
</dbReference>
<dbReference type="GO" id="GO:0090158">
    <property type="term" value="P:endoplasmic reticulum membrane organization"/>
    <property type="evidence" value="ECO:0007669"/>
    <property type="project" value="EnsemblFungi"/>
</dbReference>
<dbReference type="GO" id="GO:0006888">
    <property type="term" value="P:endoplasmic reticulum to Golgi vesicle-mediated transport"/>
    <property type="evidence" value="ECO:0007669"/>
    <property type="project" value="EnsemblFungi"/>
</dbReference>
<dbReference type="GO" id="GO:0006886">
    <property type="term" value="P:intracellular protein transport"/>
    <property type="evidence" value="ECO:0007669"/>
    <property type="project" value="InterPro"/>
</dbReference>
<dbReference type="GO" id="GO:0000266">
    <property type="term" value="P:mitochondrial fission"/>
    <property type="evidence" value="ECO:0007669"/>
    <property type="project" value="EnsemblFungi"/>
</dbReference>
<dbReference type="GO" id="GO:0007006">
    <property type="term" value="P:mitochondrial membrane organization"/>
    <property type="evidence" value="ECO:0007669"/>
    <property type="project" value="EnsemblFungi"/>
</dbReference>
<dbReference type="GO" id="GO:0006998">
    <property type="term" value="P:nuclear envelope organization"/>
    <property type="evidence" value="ECO:0007669"/>
    <property type="project" value="EnsemblFungi"/>
</dbReference>
<dbReference type="GO" id="GO:1902953">
    <property type="term" value="P:positive regulation of ER to Golgi vesicle-mediated transport"/>
    <property type="evidence" value="ECO:0007669"/>
    <property type="project" value="EnsemblFungi"/>
</dbReference>
<dbReference type="GO" id="GO:0070863">
    <property type="term" value="P:positive regulation of protein exit from endoplasmic reticulum"/>
    <property type="evidence" value="ECO:0007669"/>
    <property type="project" value="EnsemblFungi"/>
</dbReference>
<dbReference type="GO" id="GO:0003400">
    <property type="term" value="P:regulation of COPII vesicle coating"/>
    <property type="evidence" value="ECO:0007669"/>
    <property type="project" value="EnsemblFungi"/>
</dbReference>
<dbReference type="GO" id="GO:0016050">
    <property type="term" value="P:vesicle organization"/>
    <property type="evidence" value="ECO:0007669"/>
    <property type="project" value="EnsemblFungi"/>
</dbReference>
<dbReference type="CDD" id="cd00879">
    <property type="entry name" value="Sar1"/>
    <property type="match status" value="1"/>
</dbReference>
<dbReference type="FunFam" id="3.40.50.300:FF:000161">
    <property type="entry name" value="Small COPII coat GTPase"/>
    <property type="match status" value="1"/>
</dbReference>
<dbReference type="Gene3D" id="3.40.50.300">
    <property type="entry name" value="P-loop containing nucleotide triphosphate hydrolases"/>
    <property type="match status" value="1"/>
</dbReference>
<dbReference type="InterPro" id="IPR027417">
    <property type="entry name" value="P-loop_NTPase"/>
</dbReference>
<dbReference type="InterPro" id="IPR005225">
    <property type="entry name" value="Small_GTP-bd"/>
</dbReference>
<dbReference type="InterPro" id="IPR006689">
    <property type="entry name" value="Small_GTPase_ARF/SAR"/>
</dbReference>
<dbReference type="InterPro" id="IPR006687">
    <property type="entry name" value="Small_GTPase_SAR1"/>
</dbReference>
<dbReference type="NCBIfam" id="TIGR00231">
    <property type="entry name" value="small_GTP"/>
    <property type="match status" value="1"/>
</dbReference>
<dbReference type="PANTHER" id="PTHR45684">
    <property type="entry name" value="RE74312P"/>
    <property type="match status" value="1"/>
</dbReference>
<dbReference type="Pfam" id="PF00025">
    <property type="entry name" value="Arf"/>
    <property type="match status" value="1"/>
</dbReference>
<dbReference type="PRINTS" id="PR00328">
    <property type="entry name" value="SAR1GTPBP"/>
</dbReference>
<dbReference type="SMART" id="SM00177">
    <property type="entry name" value="ARF"/>
    <property type="match status" value="1"/>
</dbReference>
<dbReference type="SMART" id="SM00178">
    <property type="entry name" value="SAR"/>
    <property type="match status" value="1"/>
</dbReference>
<dbReference type="SUPFAM" id="SSF52540">
    <property type="entry name" value="P-loop containing nucleoside triphosphate hydrolases"/>
    <property type="match status" value="1"/>
</dbReference>
<dbReference type="PROSITE" id="PS51422">
    <property type="entry name" value="SAR1"/>
    <property type="match status" value="1"/>
</dbReference>
<proteinExistence type="inferred from homology"/>
<name>SAR1_PYRO7</name>